<name>MMS2_SCHPO</name>
<gene>
    <name type="primary">spm2</name>
    <name type="ORF">SPCC338.05c</name>
</gene>
<comment type="function">
    <text evidence="2">Has a role in the DNA error-free postreplication repair (PRR) pathway. Lacks catalytic activity by itself. The ubc13/spm2 heterodimer catalyzes the synthesis of non-canonical poly-ubiquitin chains that are linked through 'Lys-63'.</text>
</comment>
<comment type="subunit">
    <text>Heterodimer with ubc13.</text>
</comment>
<comment type="similarity">
    <text evidence="1">Belongs to the ubiquitin-conjugating enzyme family.</text>
</comment>
<accession>O74983</accession>
<sequence length="139" mass="15555">MAKVPRNFKLLEELEKGEKGLGESSCSYGLTNADDITLSDWNATILGPAHSVHENRIYSLKIHCDANYPDAPPIVTFVSRINLPGVDGETGKVNPHKIDCLRHWKREYSMETVLLDLKKEMASSSNRKLPQPPEGSTFF</sequence>
<evidence type="ECO:0000255" key="1">
    <source>
        <dbReference type="PROSITE-ProRule" id="PRU00388"/>
    </source>
</evidence>
<evidence type="ECO:0000269" key="2">
    <source>
    </source>
</evidence>
<protein>
    <recommendedName>
        <fullName>Ubiquitin-conjugating enzyme spm2</fullName>
    </recommendedName>
    <alternativeName>
        <fullName>Ubiquitin-conjugating enzyme variant MMS2 homolog</fullName>
        <shortName>UEV MMS2</shortName>
    </alternativeName>
</protein>
<reference key="1">
    <citation type="journal article" date="2002" name="DNA Repair">
        <title>Structural and functional conservation of error-free DNA postreplication repair in Schizosaccharomyces pombe.</title>
        <authorList>
            <person name="Brown M."/>
            <person name="Zhu Y."/>
            <person name="Hemmingsen S.M."/>
            <person name="Xiao W."/>
        </authorList>
    </citation>
    <scope>NUCLEOTIDE SEQUENCE [MRNA]</scope>
    <scope>FUNCTION</scope>
    <scope>INTERACTION WITH UBC13</scope>
</reference>
<reference key="2">
    <citation type="journal article" date="2002" name="Nature">
        <title>The genome sequence of Schizosaccharomyces pombe.</title>
        <authorList>
            <person name="Wood V."/>
            <person name="Gwilliam R."/>
            <person name="Rajandream M.A."/>
            <person name="Lyne M.H."/>
            <person name="Lyne R."/>
            <person name="Stewart A."/>
            <person name="Sgouros J.G."/>
            <person name="Peat N."/>
            <person name="Hayles J."/>
            <person name="Baker S.G."/>
            <person name="Basham D."/>
            <person name="Bowman S."/>
            <person name="Brooks K."/>
            <person name="Brown D."/>
            <person name="Brown S."/>
            <person name="Chillingworth T."/>
            <person name="Churcher C.M."/>
            <person name="Collins M."/>
            <person name="Connor R."/>
            <person name="Cronin A."/>
            <person name="Davis P."/>
            <person name="Feltwell T."/>
            <person name="Fraser A."/>
            <person name="Gentles S."/>
            <person name="Goble A."/>
            <person name="Hamlin N."/>
            <person name="Harris D.E."/>
            <person name="Hidalgo J."/>
            <person name="Hodgson G."/>
            <person name="Holroyd S."/>
            <person name="Hornsby T."/>
            <person name="Howarth S."/>
            <person name="Huckle E.J."/>
            <person name="Hunt S."/>
            <person name="Jagels K."/>
            <person name="James K.D."/>
            <person name="Jones L."/>
            <person name="Jones M."/>
            <person name="Leather S."/>
            <person name="McDonald S."/>
            <person name="McLean J."/>
            <person name="Mooney P."/>
            <person name="Moule S."/>
            <person name="Mungall K.L."/>
            <person name="Murphy L.D."/>
            <person name="Niblett D."/>
            <person name="Odell C."/>
            <person name="Oliver K."/>
            <person name="O'Neil S."/>
            <person name="Pearson D."/>
            <person name="Quail M.A."/>
            <person name="Rabbinowitsch E."/>
            <person name="Rutherford K.M."/>
            <person name="Rutter S."/>
            <person name="Saunders D."/>
            <person name="Seeger K."/>
            <person name="Sharp S."/>
            <person name="Skelton J."/>
            <person name="Simmonds M.N."/>
            <person name="Squares R."/>
            <person name="Squares S."/>
            <person name="Stevens K."/>
            <person name="Taylor K."/>
            <person name="Taylor R.G."/>
            <person name="Tivey A."/>
            <person name="Walsh S.V."/>
            <person name="Warren T."/>
            <person name="Whitehead S."/>
            <person name="Woodward J.R."/>
            <person name="Volckaert G."/>
            <person name="Aert R."/>
            <person name="Robben J."/>
            <person name="Grymonprez B."/>
            <person name="Weltjens I."/>
            <person name="Vanstreels E."/>
            <person name="Rieger M."/>
            <person name="Schaefer M."/>
            <person name="Mueller-Auer S."/>
            <person name="Gabel C."/>
            <person name="Fuchs M."/>
            <person name="Duesterhoeft A."/>
            <person name="Fritzc C."/>
            <person name="Holzer E."/>
            <person name="Moestl D."/>
            <person name="Hilbert H."/>
            <person name="Borzym K."/>
            <person name="Langer I."/>
            <person name="Beck A."/>
            <person name="Lehrach H."/>
            <person name="Reinhardt R."/>
            <person name="Pohl T.M."/>
            <person name="Eger P."/>
            <person name="Zimmermann W."/>
            <person name="Wedler H."/>
            <person name="Wambutt R."/>
            <person name="Purnelle B."/>
            <person name="Goffeau A."/>
            <person name="Cadieu E."/>
            <person name="Dreano S."/>
            <person name="Gloux S."/>
            <person name="Lelaure V."/>
            <person name="Mottier S."/>
            <person name="Galibert F."/>
            <person name="Aves S.J."/>
            <person name="Xiang Z."/>
            <person name="Hunt C."/>
            <person name="Moore K."/>
            <person name="Hurst S.M."/>
            <person name="Lucas M."/>
            <person name="Rochet M."/>
            <person name="Gaillardin C."/>
            <person name="Tallada V.A."/>
            <person name="Garzon A."/>
            <person name="Thode G."/>
            <person name="Daga R.R."/>
            <person name="Cruzado L."/>
            <person name="Jimenez J."/>
            <person name="Sanchez M."/>
            <person name="del Rey F."/>
            <person name="Benito J."/>
            <person name="Dominguez A."/>
            <person name="Revuelta J.L."/>
            <person name="Moreno S."/>
            <person name="Armstrong J."/>
            <person name="Forsburg S.L."/>
            <person name="Cerutti L."/>
            <person name="Lowe T."/>
            <person name="McCombie W.R."/>
            <person name="Paulsen I."/>
            <person name="Potashkin J."/>
            <person name="Shpakovski G.V."/>
            <person name="Ussery D."/>
            <person name="Barrell B.G."/>
            <person name="Nurse P."/>
        </authorList>
    </citation>
    <scope>NUCLEOTIDE SEQUENCE [LARGE SCALE GENOMIC DNA]</scope>
    <source>
        <strain>972 / ATCC 24843</strain>
    </source>
</reference>
<feature type="chain" id="PRO_0000082599" description="Ubiquitin-conjugating enzyme spm2">
    <location>
        <begin position="1"/>
        <end position="139"/>
    </location>
</feature>
<feature type="domain" description="UBC core" evidence="1">
    <location>
        <begin position="5"/>
        <end position="139"/>
    </location>
</feature>
<proteinExistence type="evidence at protein level"/>
<organism>
    <name type="scientific">Schizosaccharomyces pombe (strain 972 / ATCC 24843)</name>
    <name type="common">Fission yeast</name>
    <dbReference type="NCBI Taxonomy" id="284812"/>
    <lineage>
        <taxon>Eukaryota</taxon>
        <taxon>Fungi</taxon>
        <taxon>Dikarya</taxon>
        <taxon>Ascomycota</taxon>
        <taxon>Taphrinomycotina</taxon>
        <taxon>Schizosaccharomycetes</taxon>
        <taxon>Schizosaccharomycetales</taxon>
        <taxon>Schizosaccharomycetaceae</taxon>
        <taxon>Schizosaccharomyces</taxon>
    </lineage>
</organism>
<dbReference type="EMBL" id="AF470233">
    <property type="protein sequence ID" value="AAL79845.1"/>
    <property type="molecule type" value="mRNA"/>
</dbReference>
<dbReference type="EMBL" id="CU329672">
    <property type="protein sequence ID" value="CAA19336.1"/>
    <property type="molecule type" value="Genomic_DNA"/>
</dbReference>
<dbReference type="PIR" id="T41737">
    <property type="entry name" value="T41737"/>
</dbReference>
<dbReference type="RefSeq" id="NP_588162.1">
    <property type="nucleotide sequence ID" value="NM_001023151.2"/>
</dbReference>
<dbReference type="SMR" id="O74983"/>
<dbReference type="BioGRID" id="275304">
    <property type="interactions" value="10"/>
</dbReference>
<dbReference type="FunCoup" id="O74983">
    <property type="interactions" value="1042"/>
</dbReference>
<dbReference type="STRING" id="284812.O74983"/>
<dbReference type="iPTMnet" id="O74983"/>
<dbReference type="PaxDb" id="4896-SPCC338.05c.1"/>
<dbReference type="EnsemblFungi" id="SPCC338.05c.1">
    <property type="protein sequence ID" value="SPCC338.05c.1:pep"/>
    <property type="gene ID" value="SPCC338.05c"/>
</dbReference>
<dbReference type="GeneID" id="2538720"/>
<dbReference type="KEGG" id="spo:2538720"/>
<dbReference type="PomBase" id="SPCC338.05c"/>
<dbReference type="VEuPathDB" id="FungiDB:SPCC338.05c"/>
<dbReference type="eggNOG" id="KOG0896">
    <property type="taxonomic scope" value="Eukaryota"/>
</dbReference>
<dbReference type="HOGENOM" id="CLU_063065_4_0_1"/>
<dbReference type="InParanoid" id="O74983"/>
<dbReference type="OMA" id="GPESCSY"/>
<dbReference type="PhylomeDB" id="O74983"/>
<dbReference type="Reactome" id="R-SPO-5205685">
    <property type="pathway name" value="PINK1-PRKN Mediated Mitophagy"/>
</dbReference>
<dbReference type="Reactome" id="R-SPO-5693565">
    <property type="pathway name" value="Recruitment and ATM-mediated phosphorylation of repair and signaling proteins at DNA double strand breaks"/>
</dbReference>
<dbReference type="Reactome" id="R-SPO-8866654">
    <property type="pathway name" value="E3 ubiquitin ligases ubiquitinate target proteins"/>
</dbReference>
<dbReference type="Reactome" id="R-SPO-9020702">
    <property type="pathway name" value="Interleukin-1 signaling"/>
</dbReference>
<dbReference type="Reactome" id="R-SPO-9646399">
    <property type="pathway name" value="Aggrephagy"/>
</dbReference>
<dbReference type="Reactome" id="R-SPO-983168">
    <property type="pathway name" value="Antigen processing: Ubiquitination &amp; Proteasome degradation"/>
</dbReference>
<dbReference type="PRO" id="PR:O74983"/>
<dbReference type="Proteomes" id="UP000002485">
    <property type="component" value="Chromosome III"/>
</dbReference>
<dbReference type="GO" id="GO:0005829">
    <property type="term" value="C:cytosol"/>
    <property type="evidence" value="ECO:0007005"/>
    <property type="project" value="PomBase"/>
</dbReference>
<dbReference type="GO" id="GO:0005634">
    <property type="term" value="C:nucleus"/>
    <property type="evidence" value="ECO:0007005"/>
    <property type="project" value="PomBase"/>
</dbReference>
<dbReference type="GO" id="GO:0031371">
    <property type="term" value="C:ubiquitin conjugating enzyme complex"/>
    <property type="evidence" value="ECO:0000318"/>
    <property type="project" value="GO_Central"/>
</dbReference>
<dbReference type="GO" id="GO:0016874">
    <property type="term" value="F:ligase activity"/>
    <property type="evidence" value="ECO:0007669"/>
    <property type="project" value="UniProtKB-KW"/>
</dbReference>
<dbReference type="GO" id="GO:0061631">
    <property type="term" value="F:ubiquitin conjugating enzyme activity"/>
    <property type="evidence" value="ECO:0000314"/>
    <property type="project" value="PomBase"/>
</dbReference>
<dbReference type="GO" id="GO:0006301">
    <property type="term" value="P:postreplication repair"/>
    <property type="evidence" value="ECO:0000315"/>
    <property type="project" value="PomBase"/>
</dbReference>
<dbReference type="GO" id="GO:0070534">
    <property type="term" value="P:protein K63-linked ubiquitination"/>
    <property type="evidence" value="ECO:0000318"/>
    <property type="project" value="GO_Central"/>
</dbReference>
<dbReference type="CDD" id="cd23807">
    <property type="entry name" value="UEV_UBE2V"/>
    <property type="match status" value="1"/>
</dbReference>
<dbReference type="FunFam" id="3.10.110.10:FF:000026">
    <property type="entry name" value="Ubiquitin-conjugating enzyme E2 variant"/>
    <property type="match status" value="1"/>
</dbReference>
<dbReference type="Gene3D" id="3.10.110.10">
    <property type="entry name" value="Ubiquitin Conjugating Enzyme"/>
    <property type="match status" value="1"/>
</dbReference>
<dbReference type="InterPro" id="IPR000608">
    <property type="entry name" value="UBQ-conjugat_E2_core"/>
</dbReference>
<dbReference type="InterPro" id="IPR016135">
    <property type="entry name" value="UBQ-conjugating_enzyme/RWD"/>
</dbReference>
<dbReference type="PANTHER" id="PTHR24068">
    <property type="entry name" value="UBIQUITIN-CONJUGATING ENZYME E2"/>
    <property type="match status" value="1"/>
</dbReference>
<dbReference type="Pfam" id="PF00179">
    <property type="entry name" value="UQ_con"/>
    <property type="match status" value="1"/>
</dbReference>
<dbReference type="SMART" id="SM00212">
    <property type="entry name" value="UBCc"/>
    <property type="match status" value="1"/>
</dbReference>
<dbReference type="SUPFAM" id="SSF54495">
    <property type="entry name" value="UBC-like"/>
    <property type="match status" value="1"/>
</dbReference>
<dbReference type="PROSITE" id="PS50127">
    <property type="entry name" value="UBC_2"/>
    <property type="match status" value="1"/>
</dbReference>
<keyword id="KW-0436">Ligase</keyword>
<keyword id="KW-1185">Reference proteome</keyword>
<keyword id="KW-0833">Ubl conjugation pathway</keyword>